<keyword id="KW-0068">Autocatalytic cleavage</keyword>
<keyword id="KW-0210">Decarboxylase</keyword>
<keyword id="KW-0456">Lyase</keyword>
<keyword id="KW-0620">Polyamine biosynthesis</keyword>
<keyword id="KW-0670">Pyruvate</keyword>
<keyword id="KW-1185">Reference proteome</keyword>
<keyword id="KW-0949">S-adenosyl-L-methionine</keyword>
<keyword id="KW-0704">Schiff base</keyword>
<keyword id="KW-0745">Spermidine biosynthesis</keyword>
<keyword id="KW-0865">Zymogen</keyword>
<organism>
    <name type="scientific">Geobacillus kaustophilus (strain HTA426)</name>
    <dbReference type="NCBI Taxonomy" id="235909"/>
    <lineage>
        <taxon>Bacteria</taxon>
        <taxon>Bacillati</taxon>
        <taxon>Bacillota</taxon>
        <taxon>Bacilli</taxon>
        <taxon>Bacillales</taxon>
        <taxon>Anoxybacillaceae</taxon>
        <taxon>Geobacillus</taxon>
        <taxon>Geobacillus thermoleovorans group</taxon>
    </lineage>
</organism>
<proteinExistence type="inferred from homology"/>
<name>SPEH_GEOKA</name>
<dbReference type="EC" id="4.1.1.50" evidence="1"/>
<dbReference type="EMBL" id="BA000043">
    <property type="protein sequence ID" value="BAD77010.1"/>
    <property type="molecule type" value="Genomic_DNA"/>
</dbReference>
<dbReference type="SMR" id="Q5KWC6"/>
<dbReference type="STRING" id="235909.GK2725"/>
<dbReference type="KEGG" id="gka:GK2725"/>
<dbReference type="eggNOG" id="COG1586">
    <property type="taxonomic scope" value="Bacteria"/>
</dbReference>
<dbReference type="HOGENOM" id="CLU_125470_2_3_9"/>
<dbReference type="UniPathway" id="UPA00331">
    <property type="reaction ID" value="UER00451"/>
</dbReference>
<dbReference type="Proteomes" id="UP000001172">
    <property type="component" value="Chromosome"/>
</dbReference>
<dbReference type="GO" id="GO:0005829">
    <property type="term" value="C:cytosol"/>
    <property type="evidence" value="ECO:0007669"/>
    <property type="project" value="TreeGrafter"/>
</dbReference>
<dbReference type="GO" id="GO:0004014">
    <property type="term" value="F:adenosylmethionine decarboxylase activity"/>
    <property type="evidence" value="ECO:0007669"/>
    <property type="project" value="UniProtKB-UniRule"/>
</dbReference>
<dbReference type="GO" id="GO:0008295">
    <property type="term" value="P:spermidine biosynthetic process"/>
    <property type="evidence" value="ECO:0007669"/>
    <property type="project" value="UniProtKB-UniRule"/>
</dbReference>
<dbReference type="FunFam" id="3.30.360.110:FF:000001">
    <property type="entry name" value="S-adenosylmethionine decarboxylase proenzyme"/>
    <property type="match status" value="1"/>
</dbReference>
<dbReference type="Gene3D" id="3.30.160.750">
    <property type="match status" value="1"/>
</dbReference>
<dbReference type="Gene3D" id="3.30.360.110">
    <property type="entry name" value="S-adenosylmethionine decarboxylase domain"/>
    <property type="match status" value="1"/>
</dbReference>
<dbReference type="HAMAP" id="MF_00464">
    <property type="entry name" value="AdoMetDC_1"/>
    <property type="match status" value="1"/>
</dbReference>
<dbReference type="InterPro" id="IPR042286">
    <property type="entry name" value="AdoMetDC_C"/>
</dbReference>
<dbReference type="InterPro" id="IPR003826">
    <property type="entry name" value="AdoMetDC_fam_prok"/>
</dbReference>
<dbReference type="InterPro" id="IPR042284">
    <property type="entry name" value="AdoMetDC_N"/>
</dbReference>
<dbReference type="InterPro" id="IPR016067">
    <property type="entry name" value="S-AdoMet_deCO2ase_core"/>
</dbReference>
<dbReference type="InterPro" id="IPR017716">
    <property type="entry name" value="S-AdoMet_deCOase_pro-enz"/>
</dbReference>
<dbReference type="NCBIfam" id="TIGR03330">
    <property type="entry name" value="SAM_DCase_Bsu"/>
    <property type="match status" value="1"/>
</dbReference>
<dbReference type="PANTHER" id="PTHR33866">
    <property type="entry name" value="S-ADENOSYLMETHIONINE DECARBOXYLASE PROENZYME"/>
    <property type="match status" value="1"/>
</dbReference>
<dbReference type="PANTHER" id="PTHR33866:SF2">
    <property type="entry name" value="S-ADENOSYLMETHIONINE DECARBOXYLASE PROENZYME"/>
    <property type="match status" value="1"/>
</dbReference>
<dbReference type="Pfam" id="PF02675">
    <property type="entry name" value="AdoMet_dc"/>
    <property type="match status" value="1"/>
</dbReference>
<dbReference type="SUPFAM" id="SSF56276">
    <property type="entry name" value="S-adenosylmethionine decarboxylase"/>
    <property type="match status" value="1"/>
</dbReference>
<gene>
    <name evidence="1" type="primary">speH</name>
    <name type="ordered locus">GK2725</name>
</gene>
<feature type="chain" id="PRO_0000030105" description="S-adenosylmethionine decarboxylase beta chain" evidence="1">
    <location>
        <begin position="1"/>
        <end position="62"/>
    </location>
</feature>
<feature type="chain" id="PRO_0000030106" description="S-adenosylmethionine decarboxylase alpha chain" evidence="1">
    <location>
        <begin position="63"/>
        <end position="124"/>
    </location>
</feature>
<feature type="active site" description="Schiff-base intermediate with substrate; via pyruvic acid" evidence="1">
    <location>
        <position position="63"/>
    </location>
</feature>
<feature type="active site" description="Proton acceptor; for processing activity" evidence="1">
    <location>
        <position position="68"/>
    </location>
</feature>
<feature type="active site" description="Proton donor; for catalytic activity" evidence="1">
    <location>
        <position position="83"/>
    </location>
</feature>
<feature type="site" description="Cleavage (non-hydrolytic); by autolysis" evidence="1">
    <location>
        <begin position="62"/>
        <end position="63"/>
    </location>
</feature>
<feature type="modified residue" description="Pyruvic acid (Ser); by autocatalysis" evidence="1">
    <location>
        <position position="63"/>
    </location>
</feature>
<protein>
    <recommendedName>
        <fullName evidence="1">S-adenosylmethionine decarboxylase proenzyme</fullName>
        <shortName evidence="1">AdoMetDC</shortName>
        <shortName evidence="1">SAMDC</shortName>
        <ecNumber evidence="1">4.1.1.50</ecNumber>
    </recommendedName>
    <component>
        <recommendedName>
            <fullName evidence="1">S-adenosylmethionine decarboxylase beta chain</fullName>
        </recommendedName>
    </component>
    <component>
        <recommendedName>
            <fullName evidence="1">S-adenosylmethionine decarboxylase alpha chain</fullName>
        </recommendedName>
    </component>
</protein>
<reference key="1">
    <citation type="journal article" date="2004" name="Nucleic Acids Res.">
        <title>Thermoadaptation trait revealed by the genome sequence of thermophilic Geobacillus kaustophilus.</title>
        <authorList>
            <person name="Takami H."/>
            <person name="Takaki Y."/>
            <person name="Chee G.-J."/>
            <person name="Nishi S."/>
            <person name="Shimamura S."/>
            <person name="Suzuki H."/>
            <person name="Matsui S."/>
            <person name="Uchiyama I."/>
        </authorList>
    </citation>
    <scope>NUCLEOTIDE SEQUENCE [LARGE SCALE GENOMIC DNA]</scope>
    <source>
        <strain>HTA426</strain>
    </source>
</reference>
<evidence type="ECO:0000255" key="1">
    <source>
        <dbReference type="HAMAP-Rule" id="MF_00464"/>
    </source>
</evidence>
<accession>Q5KWC6</accession>
<sequence length="124" mass="13746">MDTMGRHVISELWGCDFDKLNDIDFIEKTFVDAALKSGAEIREVAFHKFAPQGVSGVVIISESHLTIHTFPEHGYASIDVYTCGHLDPTIAADYIAEMLGAQTRETIELPRGMRPIEVKKAQAL</sequence>
<comment type="function">
    <text evidence="1">Catalyzes the decarboxylation of S-adenosylmethionine to S-adenosylmethioninamine (dcAdoMet), the propylamine donor required for the synthesis of the polyamines spermine and spermidine from the diamine putrescine.</text>
</comment>
<comment type="catalytic activity">
    <reaction evidence="1">
        <text>S-adenosyl-L-methionine + H(+) = S-adenosyl 3-(methylsulfanyl)propylamine + CO2</text>
        <dbReference type="Rhea" id="RHEA:15981"/>
        <dbReference type="ChEBI" id="CHEBI:15378"/>
        <dbReference type="ChEBI" id="CHEBI:16526"/>
        <dbReference type="ChEBI" id="CHEBI:57443"/>
        <dbReference type="ChEBI" id="CHEBI:59789"/>
        <dbReference type="EC" id="4.1.1.50"/>
    </reaction>
</comment>
<comment type="cofactor">
    <cofactor evidence="1">
        <name>pyruvate</name>
        <dbReference type="ChEBI" id="CHEBI:15361"/>
    </cofactor>
    <text evidence="1">Binds 1 pyruvoyl group covalently per subunit.</text>
</comment>
<comment type="pathway">
    <text evidence="1">Amine and polyamine biosynthesis; S-adenosylmethioninamine biosynthesis; S-adenosylmethioninamine from S-adenosyl-L-methionine: step 1/1.</text>
</comment>
<comment type="subunit">
    <text evidence="1">Heterotetramer of two alpha and two beta chains arranged as a dimer of alpha/beta heterodimers.</text>
</comment>
<comment type="PTM">
    <text evidence="1">Is synthesized initially as an inactive proenzyme. Formation of the active enzyme involves a self-maturation process in which the active site pyruvoyl group is generated from an internal serine residue via an autocatalytic post-translational modification. Two non-identical subunits are generated from the proenzyme in this reaction, and the pyruvate is formed at the N-terminus of the alpha chain, which is derived from the carboxyl end of the proenzyme. The post-translation cleavage follows an unusual pathway, termed non-hydrolytic serinolysis, in which the side chain hydroxyl group of the serine supplies its oxygen atom to form the C-terminus of the beta chain, while the remainder of the serine residue undergoes an oxidative deamination to produce ammonia and the pyruvoyl group blocking the N-terminus of the alpha chain.</text>
</comment>
<comment type="similarity">
    <text evidence="1">Belongs to the prokaryotic AdoMetDC family. Type 1 subfamily.</text>
</comment>